<comment type="similarity">
    <text evidence="1">Belongs to the UPF0371 family.</text>
</comment>
<accession>C3PKD9</accession>
<sequence length="498" mass="54961">MGRAIGFDREKYIELQSEHINARRKEIGGKLYLEMGGKLFDDMHASRVLPGFTPDNKIAMLERIKDDVEILVCINAKDIERQKMRGDLGILYEDDVLRLVDVFRDRGFLVNNIVMTQLEDGNSQAEAFIERLERLGLTVARHRIIPGYPANIDLIVSEDGLGKNDYVETTRDLVVVTAPGPGSGKLATALSQVYHENLRGVPAGYAKFETFPIWNLPLDHPVNLAYEAATVDLNDANVIDHFHLSAHGESTVNYNRDVEAFPLLKSLLERLTGTVPYQSPTDMGVNMVGFCITDDEVCREASQQEIIRRYFKTLVEEARNGLDTTQSERAAVVMAKAGIKSTDRPVVLPARQKAEETQGPAAALQLHDGTIITGRTSPLLGCSAAALLNALKHLAGIDDELHLLSPESIEPIQTLKTKHLGSQNPRLHTDEVLIALSVSAAKDENARRALDALKELQGCDVHTTTILGSVDEGIFRNLGVLVTSDPVFARKSALYQKR</sequence>
<protein>
    <recommendedName>
        <fullName evidence="1">UPF0371 protein cauri_2449</fullName>
    </recommendedName>
</protein>
<dbReference type="EMBL" id="CP001601">
    <property type="protein sequence ID" value="ACP34040.1"/>
    <property type="molecule type" value="Genomic_DNA"/>
</dbReference>
<dbReference type="RefSeq" id="WP_010187918.1">
    <property type="nucleotide sequence ID" value="NC_012590.1"/>
</dbReference>
<dbReference type="SMR" id="C3PKD9"/>
<dbReference type="STRING" id="548476.cauri_2449"/>
<dbReference type="GeneID" id="31925099"/>
<dbReference type="KEGG" id="car:cauri_2449"/>
<dbReference type="eggNOG" id="COG4868">
    <property type="taxonomic scope" value="Bacteria"/>
</dbReference>
<dbReference type="HOGENOM" id="CLU_046981_0_0_11"/>
<dbReference type="OrthoDB" id="9803572at2"/>
<dbReference type="Proteomes" id="UP000002077">
    <property type="component" value="Chromosome"/>
</dbReference>
<dbReference type="Gene3D" id="1.20.1570.10">
    <property type="entry name" value="dip2346 domain like"/>
    <property type="match status" value="1"/>
</dbReference>
<dbReference type="Gene3D" id="3.10.630.10">
    <property type="entry name" value="dip2346 domain like"/>
    <property type="match status" value="1"/>
</dbReference>
<dbReference type="Gene3D" id="3.40.140.40">
    <property type="entry name" value="Domain of unknown function (DUF1846), C-terminal subdomain"/>
    <property type="match status" value="1"/>
</dbReference>
<dbReference type="HAMAP" id="MF_01567">
    <property type="entry name" value="UPF0371"/>
    <property type="match status" value="1"/>
</dbReference>
<dbReference type="InterPro" id="IPR014999">
    <property type="entry name" value="DUF1846"/>
</dbReference>
<dbReference type="InterPro" id="IPR048441">
    <property type="entry name" value="DUF1846_C"/>
</dbReference>
<dbReference type="InterPro" id="IPR048496">
    <property type="entry name" value="DUF1846_N"/>
</dbReference>
<dbReference type="NCBIfam" id="NF010184">
    <property type="entry name" value="PRK13663.1"/>
    <property type="match status" value="1"/>
</dbReference>
<dbReference type="Pfam" id="PF08903">
    <property type="entry name" value="DUF1846"/>
    <property type="match status" value="1"/>
</dbReference>
<dbReference type="Pfam" id="PF20921">
    <property type="entry name" value="DUF1846_C"/>
    <property type="match status" value="1"/>
</dbReference>
<dbReference type="PIRSF" id="PIRSF033132">
    <property type="entry name" value="DUF1846"/>
    <property type="match status" value="1"/>
</dbReference>
<keyword id="KW-1185">Reference proteome</keyword>
<organism>
    <name type="scientific">Corynebacterium aurimucosum (strain ATCC 700975 / DSM 44827 / CIP 107346 / CN-1)</name>
    <name type="common">Corynebacterium nigricans</name>
    <dbReference type="NCBI Taxonomy" id="548476"/>
    <lineage>
        <taxon>Bacteria</taxon>
        <taxon>Bacillati</taxon>
        <taxon>Actinomycetota</taxon>
        <taxon>Actinomycetes</taxon>
        <taxon>Mycobacteriales</taxon>
        <taxon>Corynebacteriaceae</taxon>
        <taxon>Corynebacterium</taxon>
    </lineage>
</organism>
<gene>
    <name type="ordered locus">cauri_2449</name>
</gene>
<proteinExistence type="inferred from homology"/>
<evidence type="ECO:0000255" key="1">
    <source>
        <dbReference type="HAMAP-Rule" id="MF_01567"/>
    </source>
</evidence>
<reference key="1">
    <citation type="journal article" date="2010" name="BMC Genomics">
        <title>Complete genome sequence and lifestyle of black-pigmented Corynebacterium aurimucosum ATCC 700975 (formerly C. nigricans CN-1) isolated from a vaginal swab of a woman with spontaneous abortion.</title>
        <authorList>
            <person name="Trost E."/>
            <person name="Gotker S."/>
            <person name="Schneider J."/>
            <person name="Schneiker-Bekel S."/>
            <person name="Szczepanowski R."/>
            <person name="Tilker A."/>
            <person name="Viehoever P."/>
            <person name="Arnold W."/>
            <person name="Bekel T."/>
            <person name="Blom J."/>
            <person name="Gartemann K.H."/>
            <person name="Linke B."/>
            <person name="Goesmann A."/>
            <person name="Puhler A."/>
            <person name="Shukla S.K."/>
            <person name="Tauch A."/>
        </authorList>
    </citation>
    <scope>NUCLEOTIDE SEQUENCE [LARGE SCALE GENOMIC DNA]</scope>
    <source>
        <strain>ATCC 700975 / DSM 44827 / CIP 107346 / CN-1</strain>
    </source>
</reference>
<feature type="chain" id="PRO_1000185460" description="UPF0371 protein cauri_2449">
    <location>
        <begin position="1"/>
        <end position="498"/>
    </location>
</feature>
<name>Y2449_CORA7</name>